<name>DUT_LEPBL</name>
<keyword id="KW-0378">Hydrolase</keyword>
<keyword id="KW-0460">Magnesium</keyword>
<keyword id="KW-0479">Metal-binding</keyword>
<keyword id="KW-0546">Nucleotide metabolism</keyword>
<proteinExistence type="inferred from homology"/>
<dbReference type="EC" id="3.6.1.23" evidence="1"/>
<dbReference type="EMBL" id="CP000348">
    <property type="protein sequence ID" value="ABJ79634.1"/>
    <property type="molecule type" value="Genomic_DNA"/>
</dbReference>
<dbReference type="RefSeq" id="WP_011670655.1">
    <property type="nucleotide sequence ID" value="NC_008508.1"/>
</dbReference>
<dbReference type="SMR" id="Q04Z61"/>
<dbReference type="KEGG" id="lbl:LBL_2228"/>
<dbReference type="HOGENOM" id="CLU_068508_1_2_12"/>
<dbReference type="UniPathway" id="UPA00610">
    <property type="reaction ID" value="UER00666"/>
</dbReference>
<dbReference type="GO" id="GO:0004170">
    <property type="term" value="F:dUTP diphosphatase activity"/>
    <property type="evidence" value="ECO:0007669"/>
    <property type="project" value="UniProtKB-UniRule"/>
</dbReference>
<dbReference type="GO" id="GO:0000287">
    <property type="term" value="F:magnesium ion binding"/>
    <property type="evidence" value="ECO:0007669"/>
    <property type="project" value="UniProtKB-UniRule"/>
</dbReference>
<dbReference type="GO" id="GO:0006226">
    <property type="term" value="P:dUMP biosynthetic process"/>
    <property type="evidence" value="ECO:0007669"/>
    <property type="project" value="UniProtKB-UniRule"/>
</dbReference>
<dbReference type="GO" id="GO:0046081">
    <property type="term" value="P:dUTP catabolic process"/>
    <property type="evidence" value="ECO:0007669"/>
    <property type="project" value="InterPro"/>
</dbReference>
<dbReference type="CDD" id="cd07557">
    <property type="entry name" value="trimeric_dUTPase"/>
    <property type="match status" value="1"/>
</dbReference>
<dbReference type="Gene3D" id="2.70.40.10">
    <property type="match status" value="1"/>
</dbReference>
<dbReference type="HAMAP" id="MF_00116">
    <property type="entry name" value="dUTPase_bact"/>
    <property type="match status" value="1"/>
</dbReference>
<dbReference type="InterPro" id="IPR008181">
    <property type="entry name" value="dUTPase"/>
</dbReference>
<dbReference type="InterPro" id="IPR029054">
    <property type="entry name" value="dUTPase-like"/>
</dbReference>
<dbReference type="InterPro" id="IPR036157">
    <property type="entry name" value="dUTPase-like_sf"/>
</dbReference>
<dbReference type="InterPro" id="IPR033704">
    <property type="entry name" value="dUTPase_trimeric"/>
</dbReference>
<dbReference type="NCBIfam" id="TIGR00576">
    <property type="entry name" value="dut"/>
    <property type="match status" value="1"/>
</dbReference>
<dbReference type="NCBIfam" id="NF001862">
    <property type="entry name" value="PRK00601.1"/>
    <property type="match status" value="1"/>
</dbReference>
<dbReference type="PANTHER" id="PTHR11241">
    <property type="entry name" value="DEOXYURIDINE 5'-TRIPHOSPHATE NUCLEOTIDOHYDROLASE"/>
    <property type="match status" value="1"/>
</dbReference>
<dbReference type="PANTHER" id="PTHR11241:SF0">
    <property type="entry name" value="DEOXYURIDINE 5'-TRIPHOSPHATE NUCLEOTIDOHYDROLASE"/>
    <property type="match status" value="1"/>
</dbReference>
<dbReference type="Pfam" id="PF00692">
    <property type="entry name" value="dUTPase"/>
    <property type="match status" value="1"/>
</dbReference>
<dbReference type="SUPFAM" id="SSF51283">
    <property type="entry name" value="dUTPase-like"/>
    <property type="match status" value="1"/>
</dbReference>
<protein>
    <recommendedName>
        <fullName evidence="1">Deoxyuridine 5'-triphosphate nucleotidohydrolase</fullName>
        <shortName evidence="1">dUTPase</shortName>
        <ecNumber evidence="1">3.6.1.23</ecNumber>
    </recommendedName>
    <alternativeName>
        <fullName evidence="1">dUTP pyrophosphatase</fullName>
    </alternativeName>
</protein>
<comment type="function">
    <text evidence="1">This enzyme is involved in nucleotide metabolism: it produces dUMP, the immediate precursor of thymidine nucleotides and it decreases the intracellular concentration of dUTP so that uracil cannot be incorporated into DNA.</text>
</comment>
<comment type="catalytic activity">
    <reaction evidence="1">
        <text>dUTP + H2O = dUMP + diphosphate + H(+)</text>
        <dbReference type="Rhea" id="RHEA:10248"/>
        <dbReference type="ChEBI" id="CHEBI:15377"/>
        <dbReference type="ChEBI" id="CHEBI:15378"/>
        <dbReference type="ChEBI" id="CHEBI:33019"/>
        <dbReference type="ChEBI" id="CHEBI:61555"/>
        <dbReference type="ChEBI" id="CHEBI:246422"/>
        <dbReference type="EC" id="3.6.1.23"/>
    </reaction>
</comment>
<comment type="cofactor">
    <cofactor evidence="1">
        <name>Mg(2+)</name>
        <dbReference type="ChEBI" id="CHEBI:18420"/>
    </cofactor>
</comment>
<comment type="pathway">
    <text evidence="1">Pyrimidine metabolism; dUMP biosynthesis; dUMP from dCTP (dUTP route): step 2/2.</text>
</comment>
<comment type="similarity">
    <text evidence="1">Belongs to the dUTPase family.</text>
</comment>
<accession>Q04Z61</accession>
<feature type="chain" id="PRO_1000015480" description="Deoxyuridine 5'-triphosphate nucleotidohydrolase">
    <location>
        <begin position="1"/>
        <end position="145"/>
    </location>
</feature>
<feature type="binding site" evidence="1">
    <location>
        <begin position="64"/>
        <end position="66"/>
    </location>
    <ligand>
        <name>substrate</name>
    </ligand>
</feature>
<feature type="binding site" evidence="1">
    <location>
        <position position="77"/>
    </location>
    <ligand>
        <name>substrate</name>
    </ligand>
</feature>
<feature type="binding site" evidence="1">
    <location>
        <begin position="81"/>
        <end position="83"/>
    </location>
    <ligand>
        <name>substrate</name>
    </ligand>
</feature>
<feature type="binding site" evidence="1">
    <location>
        <position position="91"/>
    </location>
    <ligand>
        <name>substrate</name>
    </ligand>
</feature>
<gene>
    <name evidence="1" type="primary">dut</name>
    <name type="ordered locus">LBL_2228</name>
</gene>
<organism>
    <name type="scientific">Leptospira borgpetersenii serovar Hardjo-bovis (strain L550)</name>
    <dbReference type="NCBI Taxonomy" id="355276"/>
    <lineage>
        <taxon>Bacteria</taxon>
        <taxon>Pseudomonadati</taxon>
        <taxon>Spirochaetota</taxon>
        <taxon>Spirochaetia</taxon>
        <taxon>Leptospirales</taxon>
        <taxon>Leptospiraceae</taxon>
        <taxon>Leptospira</taxon>
    </lineage>
</organism>
<reference key="1">
    <citation type="journal article" date="2006" name="Proc. Natl. Acad. Sci. U.S.A.">
        <title>Genome reduction in Leptospira borgpetersenii reflects limited transmission potential.</title>
        <authorList>
            <person name="Bulach D.M."/>
            <person name="Zuerner R.L."/>
            <person name="Wilson P."/>
            <person name="Seemann T."/>
            <person name="McGrath A."/>
            <person name="Cullen P.A."/>
            <person name="Davis J."/>
            <person name="Johnson M."/>
            <person name="Kuczek E."/>
            <person name="Alt D.P."/>
            <person name="Peterson-Burch B."/>
            <person name="Coppel R.L."/>
            <person name="Rood J.I."/>
            <person name="Davies J.K."/>
            <person name="Adler B."/>
        </authorList>
    </citation>
    <scope>NUCLEOTIDE SEQUENCE [LARGE SCALE GENOMIC DNA]</scope>
    <source>
        <strain>L550</strain>
    </source>
</reference>
<evidence type="ECO:0000255" key="1">
    <source>
        <dbReference type="HAMAP-Rule" id="MF_00116"/>
    </source>
</evidence>
<sequence length="145" mass="16262">MKIPIKKLRSNAELPVLQTKHAAGYDVHACLDSNLILEPNKVTLVPTGLSFEIPQEYHFEIRPRSGFSTKNQILIPNSPGTIDSDYRGELMIPLFNLGNIPFVIEHGMRIAQLLIRETHYTNWELVSEFTDTTERGTGGFGSTGH</sequence>